<evidence type="ECO:0000250" key="1"/>
<evidence type="ECO:0000250" key="2">
    <source>
        <dbReference type="UniProtKB" id="P0A9P4"/>
    </source>
</evidence>
<evidence type="ECO:0000305" key="3"/>
<organism>
    <name type="scientific">Coxiella burnetii (strain RSA 493 / Nine Mile phase I)</name>
    <dbReference type="NCBI Taxonomy" id="227377"/>
    <lineage>
        <taxon>Bacteria</taxon>
        <taxon>Pseudomonadati</taxon>
        <taxon>Pseudomonadota</taxon>
        <taxon>Gammaproteobacteria</taxon>
        <taxon>Legionellales</taxon>
        <taxon>Coxiellaceae</taxon>
        <taxon>Coxiella</taxon>
    </lineage>
</organism>
<sequence>MNKPQHHSLIILGSGPAGYTAAIYAARANLKPIMITGMEQGGQLMTTTDVDNWPGEAPGLQGPQLMERMQKHAERLDTQFIFDHINEADLNQRPFLLKGDNATYSCDALIIATGASARYLGLPSEKAYMGKGVSACATCDGFFYRGKKVAVVGGGNTAVEEALYLSHIASHVTLIHRRDKLRAEKMLSAQLIKKVEEGKVAIVWSHVIEEVLGDDQGVTGVHLKHVKEEKTQDLTIDGLFIAIGHDPNTKIFKEQLEMDEAGYLRAKSGLQGNATATNIPGVFAAGDVTDHVYRQAITAAGMGCMAALDAERYLDSLNQA</sequence>
<proteinExistence type="inferred from homology"/>
<comment type="catalytic activity">
    <reaction>
        <text>[thioredoxin]-dithiol + NADP(+) = [thioredoxin]-disulfide + NADPH + H(+)</text>
        <dbReference type="Rhea" id="RHEA:20345"/>
        <dbReference type="Rhea" id="RHEA-COMP:10698"/>
        <dbReference type="Rhea" id="RHEA-COMP:10700"/>
        <dbReference type="ChEBI" id="CHEBI:15378"/>
        <dbReference type="ChEBI" id="CHEBI:29950"/>
        <dbReference type="ChEBI" id="CHEBI:50058"/>
        <dbReference type="ChEBI" id="CHEBI:57783"/>
        <dbReference type="ChEBI" id="CHEBI:58349"/>
        <dbReference type="EC" id="1.8.1.9"/>
    </reaction>
</comment>
<comment type="cofactor">
    <cofactor evidence="2">
        <name>FAD</name>
        <dbReference type="ChEBI" id="CHEBI:57692"/>
    </cofactor>
    <text evidence="2">Binds 1 FAD per subunit.</text>
</comment>
<comment type="subunit">
    <text evidence="2">Homodimer.</text>
</comment>
<comment type="subcellular location">
    <subcellularLocation>
        <location evidence="1">Cytoplasm</location>
    </subcellularLocation>
</comment>
<comment type="miscellaneous">
    <text>The active site is a redox-active disulfide bond.</text>
</comment>
<comment type="similarity">
    <text evidence="3">Belongs to the class-II pyridine nucleotide-disulfide oxidoreductase family.</text>
</comment>
<name>TRXB_COXBU</name>
<accession>P39916</accession>
<protein>
    <recommendedName>
        <fullName>Thioredoxin reductase</fullName>
        <shortName>TRXR</shortName>
        <ecNumber>1.8.1.9</ecNumber>
    </recommendedName>
</protein>
<gene>
    <name type="primary">trxB</name>
    <name type="ordered locus">CBU_1193</name>
</gene>
<dbReference type="EC" id="1.8.1.9"/>
<dbReference type="EMBL" id="X75627">
    <property type="protein sequence ID" value="CAA53288.1"/>
    <property type="molecule type" value="Genomic_DNA"/>
</dbReference>
<dbReference type="EMBL" id="AE016828">
    <property type="protein sequence ID" value="AAO90702.1"/>
    <property type="molecule type" value="Genomic_DNA"/>
</dbReference>
<dbReference type="PIR" id="S43131">
    <property type="entry name" value="S43131"/>
</dbReference>
<dbReference type="RefSeq" id="NP_820188.1">
    <property type="nucleotide sequence ID" value="NC_002971.4"/>
</dbReference>
<dbReference type="RefSeq" id="WP_005770716.1">
    <property type="nucleotide sequence ID" value="NZ_CCYB01000035.1"/>
</dbReference>
<dbReference type="SMR" id="P39916"/>
<dbReference type="STRING" id="227377.CBU_1193"/>
<dbReference type="DNASU" id="1209097"/>
<dbReference type="EnsemblBacteria" id="AAO90702">
    <property type="protein sequence ID" value="AAO90702"/>
    <property type="gene ID" value="CBU_1193"/>
</dbReference>
<dbReference type="GeneID" id="1209097"/>
<dbReference type="KEGG" id="cbu:CBU_1193"/>
<dbReference type="PATRIC" id="fig|227377.7.peg.1190"/>
<dbReference type="eggNOG" id="COG0492">
    <property type="taxonomic scope" value="Bacteria"/>
</dbReference>
<dbReference type="HOGENOM" id="CLU_031864_5_1_6"/>
<dbReference type="OrthoDB" id="9806179at2"/>
<dbReference type="Proteomes" id="UP000002671">
    <property type="component" value="Chromosome"/>
</dbReference>
<dbReference type="GO" id="GO:0005737">
    <property type="term" value="C:cytoplasm"/>
    <property type="evidence" value="ECO:0007669"/>
    <property type="project" value="UniProtKB-SubCell"/>
</dbReference>
<dbReference type="GO" id="GO:0004791">
    <property type="term" value="F:thioredoxin-disulfide reductase (NADPH) activity"/>
    <property type="evidence" value="ECO:0000318"/>
    <property type="project" value="GO_Central"/>
</dbReference>
<dbReference type="GO" id="GO:0045454">
    <property type="term" value="P:cell redox homeostasis"/>
    <property type="evidence" value="ECO:0000318"/>
    <property type="project" value="GO_Central"/>
</dbReference>
<dbReference type="GO" id="GO:0019430">
    <property type="term" value="P:removal of superoxide radicals"/>
    <property type="evidence" value="ECO:0007669"/>
    <property type="project" value="InterPro"/>
</dbReference>
<dbReference type="Gene3D" id="3.50.50.60">
    <property type="entry name" value="FAD/NAD(P)-binding domain"/>
    <property type="match status" value="2"/>
</dbReference>
<dbReference type="InterPro" id="IPR036188">
    <property type="entry name" value="FAD/NAD-bd_sf"/>
</dbReference>
<dbReference type="InterPro" id="IPR023753">
    <property type="entry name" value="FAD/NAD-binding_dom"/>
</dbReference>
<dbReference type="InterPro" id="IPR050097">
    <property type="entry name" value="Ferredoxin-NADP_redctase_2"/>
</dbReference>
<dbReference type="InterPro" id="IPR008255">
    <property type="entry name" value="Pyr_nucl-diS_OxRdtase_2_AS"/>
</dbReference>
<dbReference type="InterPro" id="IPR005982">
    <property type="entry name" value="Thioredox_Rdtase"/>
</dbReference>
<dbReference type="NCBIfam" id="TIGR01292">
    <property type="entry name" value="TRX_reduct"/>
    <property type="match status" value="1"/>
</dbReference>
<dbReference type="PANTHER" id="PTHR48105">
    <property type="entry name" value="THIOREDOXIN REDUCTASE 1-RELATED-RELATED"/>
    <property type="match status" value="1"/>
</dbReference>
<dbReference type="Pfam" id="PF07992">
    <property type="entry name" value="Pyr_redox_2"/>
    <property type="match status" value="1"/>
</dbReference>
<dbReference type="PRINTS" id="PR00368">
    <property type="entry name" value="FADPNR"/>
</dbReference>
<dbReference type="PRINTS" id="PR00469">
    <property type="entry name" value="PNDRDTASEII"/>
</dbReference>
<dbReference type="SUPFAM" id="SSF51905">
    <property type="entry name" value="FAD/NAD(P)-binding domain"/>
    <property type="match status" value="1"/>
</dbReference>
<dbReference type="PROSITE" id="PS00573">
    <property type="entry name" value="PYRIDINE_REDOX_2"/>
    <property type="match status" value="1"/>
</dbReference>
<feature type="chain" id="PRO_0000166728" description="Thioredoxin reductase">
    <location>
        <begin position="1"/>
        <end position="320"/>
    </location>
</feature>
<feature type="binding site" evidence="2">
    <location>
        <begin position="36"/>
        <end position="43"/>
    </location>
    <ligand>
        <name>FAD</name>
        <dbReference type="ChEBI" id="CHEBI:57692"/>
    </ligand>
</feature>
<feature type="binding site" evidence="2">
    <location>
        <begin position="287"/>
        <end position="296"/>
    </location>
    <ligand>
        <name>FAD</name>
        <dbReference type="ChEBI" id="CHEBI:57692"/>
    </ligand>
</feature>
<feature type="disulfide bond" description="Redox-active" evidence="2">
    <location>
        <begin position="136"/>
        <end position="139"/>
    </location>
</feature>
<feature type="sequence conflict" description="In Ref. 1; CAA53288." evidence="3" ref="1">
    <original>A</original>
    <variation>D</variation>
    <location>
        <position position="21"/>
    </location>
</feature>
<feature type="sequence conflict" description="In Ref. 1; CAA53288." evidence="3" ref="1">
    <original>A</original>
    <variation>V</variation>
    <location>
        <position position="25"/>
    </location>
</feature>
<feature type="sequence conflict" description="In Ref. 1; CAA53288." evidence="3" ref="1">
    <original>D</original>
    <variation>A</variation>
    <location>
        <position position="51"/>
    </location>
</feature>
<feature type="sequence conflict" description="In Ref. 1; CAA53288." evidence="3" ref="1">
    <original>QLM</original>
    <variation>KLL</variation>
    <location>
        <begin position="64"/>
        <end position="66"/>
    </location>
</feature>
<feature type="sequence conflict" description="In Ref. 1; CAA53288." evidence="3" ref="1">
    <original>ERLD</original>
    <variation>GGALN</variation>
    <location>
        <begin position="74"/>
        <end position="77"/>
    </location>
</feature>
<feature type="sequence conflict" description="In Ref. 1; CAA53288." evidence="3" ref="1">
    <original>EA</original>
    <variation>KP</variation>
    <location>
        <begin position="87"/>
        <end position="88"/>
    </location>
</feature>
<feature type="sequence conflict" description="In Ref. 1; CAA53288." evidence="3" ref="1">
    <original>Q</original>
    <variation>P</variation>
    <location>
        <position position="92"/>
    </location>
</feature>
<feature type="sequence conflict" description="In Ref. 1; CAA53288." evidence="3" ref="1">
    <original>K</original>
    <variation>Q</variation>
    <location>
        <position position="98"/>
    </location>
</feature>
<feature type="sequence conflict" description="In Ref. 1; CAA53288." evidence="3" ref="1">
    <original>A</original>
    <variation>P</variation>
    <location>
        <position position="127"/>
    </location>
</feature>
<feature type="sequence conflict" description="In Ref. 1; CAA53288." evidence="3" ref="1">
    <original>G</original>
    <variation>A</variation>
    <location>
        <position position="146"/>
    </location>
</feature>
<feature type="sequence conflict" description="In Ref. 1; CAA53288." evidence="3" ref="1">
    <original>A</original>
    <variation>S</variation>
    <location>
        <position position="158"/>
    </location>
</feature>
<feature type="sequence conflict" description="In Ref. 1; CAA53288." evidence="3" ref="1">
    <original>AAGDVTDHV</original>
    <variation>PAVVVRGQL</variation>
    <location>
        <begin position="284"/>
        <end position="292"/>
    </location>
</feature>
<feature type="sequence conflict" description="In Ref. 1; CAA53288." evidence="3" ref="1">
    <original>AIT</original>
    <variation>TIA</variation>
    <location>
        <begin position="296"/>
        <end position="298"/>
    </location>
</feature>
<feature type="sequence conflict" description="In Ref. 1; CAA53288." evidence="3" ref="1">
    <original>A</original>
    <variation>P</variation>
    <location>
        <position position="306"/>
    </location>
</feature>
<reference key="1">
    <citation type="thesis" date="1994" institute="Justus Liebig University / Frankfurt" country="Germany">
        <authorList>
            <person name="Oswald W."/>
        </authorList>
    </citation>
    <scope>NUCLEOTIDE SEQUENCE [GENOMIC DNA]</scope>
    <source>
        <strain>Nine Mile phase I / Bratislava</strain>
    </source>
</reference>
<reference key="2">
    <citation type="journal article" date="2003" name="Proc. Natl. Acad. Sci. U.S.A.">
        <title>Complete genome sequence of the Q-fever pathogen, Coxiella burnetii.</title>
        <authorList>
            <person name="Seshadri R."/>
            <person name="Paulsen I.T."/>
            <person name="Eisen J.A."/>
            <person name="Read T.D."/>
            <person name="Nelson K.E."/>
            <person name="Nelson W.C."/>
            <person name="Ward N.L."/>
            <person name="Tettelin H."/>
            <person name="Davidsen T.M."/>
            <person name="Beanan M.J."/>
            <person name="DeBoy R.T."/>
            <person name="Daugherty S.C."/>
            <person name="Brinkac L.M."/>
            <person name="Madupu R."/>
            <person name="Dodson R.J."/>
            <person name="Khouri H.M."/>
            <person name="Lee K.H."/>
            <person name="Carty H.A."/>
            <person name="Scanlan D."/>
            <person name="Heinzen R.A."/>
            <person name="Thompson H.A."/>
            <person name="Samuel J.E."/>
            <person name="Fraser C.M."/>
            <person name="Heidelberg J.F."/>
        </authorList>
    </citation>
    <scope>NUCLEOTIDE SEQUENCE [LARGE SCALE GENOMIC DNA]</scope>
    <source>
        <strain>RSA 493 / Nine Mile phase I</strain>
    </source>
</reference>
<keyword id="KW-0963">Cytoplasm</keyword>
<keyword id="KW-1015">Disulfide bond</keyword>
<keyword id="KW-0274">FAD</keyword>
<keyword id="KW-0285">Flavoprotein</keyword>
<keyword id="KW-0521">NADP</keyword>
<keyword id="KW-0560">Oxidoreductase</keyword>
<keyword id="KW-0676">Redox-active center</keyword>
<keyword id="KW-1185">Reference proteome</keyword>